<accession>O52338</accession>
<sequence length="263" mass="29856">MGQKVNSNGLRFGINKNWQSRWVAKTNQQTGDWIVQDEKIRNYLFKKFHSAFISNVDIERTQTSIRVFIYASQPGIILGKEAANIKVILLAINKIVGRHIKVDVDVLEVGNPSLSAKIVARELADAIENRTPLRTAMRQALKRVLKAGAKGIKVLVSGRLNGVEIARDKMYIEGNVTLSTLRTDIDYALEEAQMSYGVIGVKVWINRGEIFGKDFYKKQAHIVKPKGSEANHQRRNSNKSKDYRDNKNKQFNKNHQNQQPAKE</sequence>
<evidence type="ECO:0000250" key="1"/>
<evidence type="ECO:0000255" key="2">
    <source>
        <dbReference type="HAMAP-Rule" id="MF_01309"/>
    </source>
</evidence>
<evidence type="ECO:0000256" key="3">
    <source>
        <dbReference type="SAM" id="MobiDB-lite"/>
    </source>
</evidence>
<evidence type="ECO:0000305" key="4"/>
<protein>
    <recommendedName>
        <fullName evidence="2">Small ribosomal subunit protein uS3</fullName>
    </recommendedName>
    <alternativeName>
        <fullName evidence="4">30S ribosomal protein S3</fullName>
    </alternativeName>
</protein>
<reference key="1">
    <citation type="journal article" date="2000" name="Mol. Biol. (Mosk.)">
        <title>Determination and analysis of the nucleotide sequence of a segment of a Mycoplasma gallisepticum strain A5969 chromosome, containing operons S10 and rrn23-5.</title>
        <authorList>
            <person name="Skamrov A.V."/>
            <person name="Gol'dman M.A."/>
            <person name="Feoktistova E.S."/>
            <person name="Bibilashvili R.S."/>
        </authorList>
    </citation>
    <scope>NUCLEOTIDE SEQUENCE [GENOMIC DNA]</scope>
    <source>
        <strain>A5969Var.B</strain>
    </source>
</reference>
<reference key="2">
    <citation type="journal article" date="2003" name="Microbiology">
        <title>The complete genome sequence of the avian pathogen Mycoplasma gallisepticum strain R(low).</title>
        <authorList>
            <person name="Papazisi L."/>
            <person name="Gorton T.S."/>
            <person name="Kutish G."/>
            <person name="Markham P.F."/>
            <person name="Browning G.F."/>
            <person name="Nguyen D.K."/>
            <person name="Swartzell S."/>
            <person name="Madan A."/>
            <person name="Mahairas G."/>
            <person name="Geary S.J."/>
        </authorList>
    </citation>
    <scope>NUCLEOTIDE SEQUENCE [LARGE SCALE GENOMIC DNA]</scope>
    <source>
        <strain>R(low / passage 15 / clone 2)</strain>
    </source>
</reference>
<keyword id="KW-1185">Reference proteome</keyword>
<keyword id="KW-0687">Ribonucleoprotein</keyword>
<keyword id="KW-0689">Ribosomal protein</keyword>
<keyword id="KW-0694">RNA-binding</keyword>
<keyword id="KW-0699">rRNA-binding</keyword>
<comment type="function">
    <text evidence="2">Binds the lower part of the 30S subunit head. Binds mRNA in the 70S ribosome, positioning it for translation.</text>
</comment>
<comment type="subunit">
    <text evidence="2">Part of the 30S ribosomal subunit. Forms a tight complex with proteins S10 and S14.</text>
</comment>
<comment type="similarity">
    <text evidence="2">Belongs to the universal ribosomal protein uS3 family.</text>
</comment>
<name>RS3_MYCGA</name>
<dbReference type="EMBL" id="AF036708">
    <property type="protein sequence ID" value="AAB95393.1"/>
    <property type="molecule type" value="Genomic_DNA"/>
</dbReference>
<dbReference type="EMBL" id="AE015450">
    <property type="protein sequence ID" value="AAP56407.2"/>
    <property type="molecule type" value="Genomic_DNA"/>
</dbReference>
<dbReference type="RefSeq" id="WP_011113286.1">
    <property type="nucleotide sequence ID" value="NC_004829.2"/>
</dbReference>
<dbReference type="SMR" id="O52338"/>
<dbReference type="GeneID" id="93509875"/>
<dbReference type="KEGG" id="mga:MGA_0717"/>
<dbReference type="PATRIC" id="fig|233150.7.peg.61"/>
<dbReference type="HOGENOM" id="CLU_058591_0_2_14"/>
<dbReference type="OrthoDB" id="9806396at2"/>
<dbReference type="Proteomes" id="UP000001418">
    <property type="component" value="Chromosome"/>
</dbReference>
<dbReference type="GO" id="GO:0022627">
    <property type="term" value="C:cytosolic small ribosomal subunit"/>
    <property type="evidence" value="ECO:0007669"/>
    <property type="project" value="TreeGrafter"/>
</dbReference>
<dbReference type="GO" id="GO:0003729">
    <property type="term" value="F:mRNA binding"/>
    <property type="evidence" value="ECO:0007669"/>
    <property type="project" value="UniProtKB-UniRule"/>
</dbReference>
<dbReference type="GO" id="GO:0019843">
    <property type="term" value="F:rRNA binding"/>
    <property type="evidence" value="ECO:0007669"/>
    <property type="project" value="UniProtKB-UniRule"/>
</dbReference>
<dbReference type="GO" id="GO:0003735">
    <property type="term" value="F:structural constituent of ribosome"/>
    <property type="evidence" value="ECO:0007669"/>
    <property type="project" value="InterPro"/>
</dbReference>
<dbReference type="GO" id="GO:0006412">
    <property type="term" value="P:translation"/>
    <property type="evidence" value="ECO:0007669"/>
    <property type="project" value="UniProtKB-UniRule"/>
</dbReference>
<dbReference type="CDD" id="cd02412">
    <property type="entry name" value="KH-II_30S_S3"/>
    <property type="match status" value="1"/>
</dbReference>
<dbReference type="FunFam" id="3.30.300.20:FF:000001">
    <property type="entry name" value="30S ribosomal protein S3"/>
    <property type="match status" value="1"/>
</dbReference>
<dbReference type="Gene3D" id="3.30.300.20">
    <property type="match status" value="1"/>
</dbReference>
<dbReference type="Gene3D" id="3.30.1140.32">
    <property type="entry name" value="Ribosomal protein S3, C-terminal domain"/>
    <property type="match status" value="1"/>
</dbReference>
<dbReference type="HAMAP" id="MF_01309_B">
    <property type="entry name" value="Ribosomal_uS3_B"/>
    <property type="match status" value="1"/>
</dbReference>
<dbReference type="InterPro" id="IPR004087">
    <property type="entry name" value="KH_dom"/>
</dbReference>
<dbReference type="InterPro" id="IPR015946">
    <property type="entry name" value="KH_dom-like_a/b"/>
</dbReference>
<dbReference type="InterPro" id="IPR004044">
    <property type="entry name" value="KH_dom_type_2"/>
</dbReference>
<dbReference type="InterPro" id="IPR009019">
    <property type="entry name" value="KH_sf_prok-type"/>
</dbReference>
<dbReference type="InterPro" id="IPR036419">
    <property type="entry name" value="Ribosomal_S3_C_sf"/>
</dbReference>
<dbReference type="InterPro" id="IPR005704">
    <property type="entry name" value="Ribosomal_uS3_bac-typ"/>
</dbReference>
<dbReference type="InterPro" id="IPR001351">
    <property type="entry name" value="Ribosomal_uS3_C"/>
</dbReference>
<dbReference type="InterPro" id="IPR018280">
    <property type="entry name" value="Ribosomal_uS3_CS"/>
</dbReference>
<dbReference type="NCBIfam" id="TIGR01009">
    <property type="entry name" value="rpsC_bact"/>
    <property type="match status" value="1"/>
</dbReference>
<dbReference type="PANTHER" id="PTHR11760">
    <property type="entry name" value="30S/40S RIBOSOMAL PROTEIN S3"/>
    <property type="match status" value="1"/>
</dbReference>
<dbReference type="PANTHER" id="PTHR11760:SF19">
    <property type="entry name" value="SMALL RIBOSOMAL SUBUNIT PROTEIN US3C"/>
    <property type="match status" value="1"/>
</dbReference>
<dbReference type="Pfam" id="PF07650">
    <property type="entry name" value="KH_2"/>
    <property type="match status" value="1"/>
</dbReference>
<dbReference type="Pfam" id="PF00189">
    <property type="entry name" value="Ribosomal_S3_C"/>
    <property type="match status" value="1"/>
</dbReference>
<dbReference type="SMART" id="SM00322">
    <property type="entry name" value="KH"/>
    <property type="match status" value="1"/>
</dbReference>
<dbReference type="SUPFAM" id="SSF54814">
    <property type="entry name" value="Prokaryotic type KH domain (KH-domain type II)"/>
    <property type="match status" value="1"/>
</dbReference>
<dbReference type="SUPFAM" id="SSF54821">
    <property type="entry name" value="Ribosomal protein S3 C-terminal domain"/>
    <property type="match status" value="1"/>
</dbReference>
<dbReference type="PROSITE" id="PS50823">
    <property type="entry name" value="KH_TYPE_2"/>
    <property type="match status" value="1"/>
</dbReference>
<dbReference type="PROSITE" id="PS00548">
    <property type="entry name" value="RIBOSOMAL_S3"/>
    <property type="match status" value="1"/>
</dbReference>
<proteinExistence type="inferred from homology"/>
<organism>
    <name type="scientific">Mycoplasmoides gallisepticum (strain R(low / passage 15 / clone 2))</name>
    <name type="common">Mycoplasma gallisepticum</name>
    <dbReference type="NCBI Taxonomy" id="710127"/>
    <lineage>
        <taxon>Bacteria</taxon>
        <taxon>Bacillati</taxon>
        <taxon>Mycoplasmatota</taxon>
        <taxon>Mycoplasmoidales</taxon>
        <taxon>Mycoplasmoidaceae</taxon>
        <taxon>Mycoplasmoides</taxon>
    </lineage>
</organism>
<feature type="initiator methionine" description="Removed" evidence="1">
    <location>
        <position position="1"/>
    </location>
</feature>
<feature type="chain" id="PRO_0000130149" description="Small ribosomal subunit protein uS3">
    <location>
        <begin position="2"/>
        <end position="263"/>
    </location>
</feature>
<feature type="domain" description="KH type-2" evidence="2">
    <location>
        <begin position="40"/>
        <end position="108"/>
    </location>
</feature>
<feature type="region of interest" description="Disordered" evidence="3">
    <location>
        <begin position="224"/>
        <end position="263"/>
    </location>
</feature>
<feature type="compositionally biased region" description="Basic and acidic residues" evidence="3">
    <location>
        <begin position="239"/>
        <end position="248"/>
    </location>
</feature>
<feature type="compositionally biased region" description="Low complexity" evidence="3">
    <location>
        <begin position="249"/>
        <end position="263"/>
    </location>
</feature>
<gene>
    <name evidence="2" type="primary">rpsC</name>
    <name evidence="2" type="synonym">rps3</name>
    <name type="ordered locus">MYCGA0570</name>
    <name type="ORF">MGA_0717</name>
</gene>